<proteinExistence type="inferred from homology"/>
<comment type="function">
    <text evidence="1">Nitric oxide-sensitive repressor of genes involved in protecting the cell against nitrosative stress. May require iron for activity.</text>
</comment>
<comment type="cofactor">
    <cofactor evidence="1">
        <name>[2Fe-2S] cluster</name>
        <dbReference type="ChEBI" id="CHEBI:190135"/>
    </cofactor>
    <text evidence="1">Binds 1 [2Fe-2S] cluster per subunit.</text>
</comment>
<protein>
    <recommendedName>
        <fullName evidence="1">HTH-type transcriptional repressor NsrR</fullName>
    </recommendedName>
</protein>
<feature type="chain" id="PRO_1000138122" description="HTH-type transcriptional repressor NsrR">
    <location>
        <begin position="1"/>
        <end position="141"/>
    </location>
</feature>
<feature type="domain" description="HTH rrf2-type" evidence="1">
    <location>
        <begin position="2"/>
        <end position="129"/>
    </location>
</feature>
<feature type="DNA-binding region" description="H-T-H motif" evidence="1">
    <location>
        <begin position="28"/>
        <end position="51"/>
    </location>
</feature>
<feature type="binding site" evidence="1">
    <location>
        <position position="91"/>
    </location>
    <ligand>
        <name>[2Fe-2S] cluster</name>
        <dbReference type="ChEBI" id="CHEBI:190135"/>
    </ligand>
</feature>
<feature type="binding site" evidence="1">
    <location>
        <position position="96"/>
    </location>
    <ligand>
        <name>[2Fe-2S] cluster</name>
        <dbReference type="ChEBI" id="CHEBI:190135"/>
    </ligand>
</feature>
<feature type="binding site" evidence="1">
    <location>
        <position position="102"/>
    </location>
    <ligand>
        <name>[2Fe-2S] cluster</name>
        <dbReference type="ChEBI" id="CHEBI:190135"/>
    </ligand>
</feature>
<name>NSRR_ECOSM</name>
<gene>
    <name evidence="1" type="primary">nsrR</name>
    <name type="ordered locus">EcSMS35_4649</name>
</gene>
<sequence>MQLTSFTDYGLRALIYMASLPEGRMTSISEVTDVYGVSRNHMVKIINQLSRAGYVTAVRGKNGGIRLGKPASAIRIGDVVRELEPLSLVNCSSEFCHITPACRLKQALSKAVQSFLTELDNYTLADLVEENQPLYKLLLVE</sequence>
<reference key="1">
    <citation type="journal article" date="2008" name="J. Bacteriol.">
        <title>Insights into the environmental resistance gene pool from the genome sequence of the multidrug-resistant environmental isolate Escherichia coli SMS-3-5.</title>
        <authorList>
            <person name="Fricke W.F."/>
            <person name="Wright M.S."/>
            <person name="Lindell A.H."/>
            <person name="Harkins D.M."/>
            <person name="Baker-Austin C."/>
            <person name="Ravel J."/>
            <person name="Stepanauskas R."/>
        </authorList>
    </citation>
    <scope>NUCLEOTIDE SEQUENCE [LARGE SCALE GENOMIC DNA]</scope>
    <source>
        <strain>SMS-3-5 / SECEC</strain>
    </source>
</reference>
<organism>
    <name type="scientific">Escherichia coli (strain SMS-3-5 / SECEC)</name>
    <dbReference type="NCBI Taxonomy" id="439855"/>
    <lineage>
        <taxon>Bacteria</taxon>
        <taxon>Pseudomonadati</taxon>
        <taxon>Pseudomonadota</taxon>
        <taxon>Gammaproteobacteria</taxon>
        <taxon>Enterobacterales</taxon>
        <taxon>Enterobacteriaceae</taxon>
        <taxon>Escherichia</taxon>
    </lineage>
</organism>
<dbReference type="EMBL" id="CP000970">
    <property type="protein sequence ID" value="ACB16642.1"/>
    <property type="molecule type" value="Genomic_DNA"/>
</dbReference>
<dbReference type="RefSeq" id="WP_001177639.1">
    <property type="nucleotide sequence ID" value="NC_010498.1"/>
</dbReference>
<dbReference type="SMR" id="B1LQJ8"/>
<dbReference type="GeneID" id="93777643"/>
<dbReference type="KEGG" id="ecm:EcSMS35_4649"/>
<dbReference type="HOGENOM" id="CLU_107144_2_1_6"/>
<dbReference type="Proteomes" id="UP000007011">
    <property type="component" value="Chromosome"/>
</dbReference>
<dbReference type="GO" id="GO:0005829">
    <property type="term" value="C:cytosol"/>
    <property type="evidence" value="ECO:0007669"/>
    <property type="project" value="TreeGrafter"/>
</dbReference>
<dbReference type="GO" id="GO:0051537">
    <property type="term" value="F:2 iron, 2 sulfur cluster binding"/>
    <property type="evidence" value="ECO:0007669"/>
    <property type="project" value="UniProtKB-KW"/>
</dbReference>
<dbReference type="GO" id="GO:0003700">
    <property type="term" value="F:DNA-binding transcription factor activity"/>
    <property type="evidence" value="ECO:0007669"/>
    <property type="project" value="UniProtKB-UniRule"/>
</dbReference>
<dbReference type="GO" id="GO:0003690">
    <property type="term" value="F:double-stranded DNA binding"/>
    <property type="evidence" value="ECO:0007669"/>
    <property type="project" value="UniProtKB-UniRule"/>
</dbReference>
<dbReference type="GO" id="GO:0005506">
    <property type="term" value="F:iron ion binding"/>
    <property type="evidence" value="ECO:0007669"/>
    <property type="project" value="UniProtKB-UniRule"/>
</dbReference>
<dbReference type="GO" id="GO:0045892">
    <property type="term" value="P:negative regulation of DNA-templated transcription"/>
    <property type="evidence" value="ECO:0007669"/>
    <property type="project" value="InterPro"/>
</dbReference>
<dbReference type="FunFam" id="1.10.10.10:FF:000105">
    <property type="entry name" value="HTH-type transcriptional repressor NsrR"/>
    <property type="match status" value="1"/>
</dbReference>
<dbReference type="Gene3D" id="1.10.10.10">
    <property type="entry name" value="Winged helix-like DNA-binding domain superfamily/Winged helix DNA-binding domain"/>
    <property type="match status" value="1"/>
</dbReference>
<dbReference type="HAMAP" id="MF_01177">
    <property type="entry name" value="HTH_type_NsrR"/>
    <property type="match status" value="1"/>
</dbReference>
<dbReference type="InterPro" id="IPR030489">
    <property type="entry name" value="TR_Rrf2-type_CS"/>
</dbReference>
<dbReference type="InterPro" id="IPR000944">
    <property type="entry name" value="Tscrpt_reg_Rrf2"/>
</dbReference>
<dbReference type="InterPro" id="IPR023761">
    <property type="entry name" value="Tscrpt_rep_HTH_NsrR"/>
</dbReference>
<dbReference type="InterPro" id="IPR036388">
    <property type="entry name" value="WH-like_DNA-bd_sf"/>
</dbReference>
<dbReference type="InterPro" id="IPR036390">
    <property type="entry name" value="WH_DNA-bd_sf"/>
</dbReference>
<dbReference type="NCBIfam" id="NF008240">
    <property type="entry name" value="PRK11014.1"/>
    <property type="match status" value="1"/>
</dbReference>
<dbReference type="NCBIfam" id="TIGR00738">
    <property type="entry name" value="rrf2_super"/>
    <property type="match status" value="1"/>
</dbReference>
<dbReference type="PANTHER" id="PTHR33221:SF4">
    <property type="entry name" value="HTH-TYPE TRANSCRIPTIONAL REPRESSOR NSRR"/>
    <property type="match status" value="1"/>
</dbReference>
<dbReference type="PANTHER" id="PTHR33221">
    <property type="entry name" value="WINGED HELIX-TURN-HELIX TRANSCRIPTIONAL REGULATOR, RRF2 FAMILY"/>
    <property type="match status" value="1"/>
</dbReference>
<dbReference type="Pfam" id="PF02082">
    <property type="entry name" value="Rrf2"/>
    <property type="match status" value="1"/>
</dbReference>
<dbReference type="SUPFAM" id="SSF46785">
    <property type="entry name" value="Winged helix' DNA-binding domain"/>
    <property type="match status" value="1"/>
</dbReference>
<dbReference type="PROSITE" id="PS01332">
    <property type="entry name" value="HTH_RRF2_1"/>
    <property type="match status" value="1"/>
</dbReference>
<dbReference type="PROSITE" id="PS51197">
    <property type="entry name" value="HTH_RRF2_2"/>
    <property type="match status" value="1"/>
</dbReference>
<evidence type="ECO:0000255" key="1">
    <source>
        <dbReference type="HAMAP-Rule" id="MF_01177"/>
    </source>
</evidence>
<accession>B1LQJ8</accession>
<keyword id="KW-0001">2Fe-2S</keyword>
<keyword id="KW-0238">DNA-binding</keyword>
<keyword id="KW-0408">Iron</keyword>
<keyword id="KW-0411">Iron-sulfur</keyword>
<keyword id="KW-0479">Metal-binding</keyword>
<keyword id="KW-0678">Repressor</keyword>
<keyword id="KW-0804">Transcription</keyword>
<keyword id="KW-0805">Transcription regulation</keyword>